<reference key="1">
    <citation type="journal article" date="1986" name="Biol. Chem. Hoppe-Seyler">
        <title>High-altitude respiration of birds. The primary structures of the alpha D-chains of the Bar-headed Goose (Anser indicus), the Greylag Goose(Anser anser) and the Canada Goose (Branta canadensis).</title>
        <authorList>
            <person name="Hiebl I."/>
            <person name="Schneeganss D."/>
            <person name="Braunitzer G."/>
        </authorList>
    </citation>
    <scope>PROTEIN SEQUENCE</scope>
</reference>
<comment type="function">
    <text>Involved in oxygen transport from the lung to the various peripheral tissues.</text>
</comment>
<comment type="subunit">
    <text>Heterotetramer of two alpha-D chains and two beta chains.</text>
</comment>
<comment type="tissue specificity">
    <text>Red blood cells.</text>
</comment>
<comment type="developmental stage">
    <text>In birds, the alpha-D chain occurs in a minor hemoglobin component, called hemoglobin d, which is expressed in late embryonic and adult life.</text>
</comment>
<comment type="similarity">
    <text evidence="1">Belongs to the globin family.</text>
</comment>
<evidence type="ECO:0000255" key="1">
    <source>
        <dbReference type="PROSITE-ProRule" id="PRU00238"/>
    </source>
</evidence>
<gene>
    <name type="primary">HBAD</name>
</gene>
<accession>P04240</accession>
<feature type="chain" id="PRO_0000052820" description="Hemoglobin subunit alpha-D">
    <location>
        <begin position="1"/>
        <end position="141"/>
    </location>
</feature>
<feature type="domain" description="Globin" evidence="1">
    <location>
        <begin position="1"/>
        <end position="141"/>
    </location>
</feature>
<feature type="binding site" description="distal binding residue">
    <location>
        <position position="58"/>
    </location>
    <ligand>
        <name>heme b</name>
        <dbReference type="ChEBI" id="CHEBI:60344"/>
    </ligand>
    <ligandPart>
        <name>Fe</name>
        <dbReference type="ChEBI" id="CHEBI:18248"/>
    </ligandPart>
</feature>
<feature type="binding site" description="proximal binding residue">
    <location>
        <position position="87"/>
    </location>
    <ligand>
        <name>heme b</name>
        <dbReference type="ChEBI" id="CHEBI:60344"/>
    </ligand>
    <ligandPart>
        <name>Fe</name>
        <dbReference type="ChEBI" id="CHEBI:18248"/>
    </ligandPart>
</feature>
<name>HBAD_BRACA</name>
<protein>
    <recommendedName>
        <fullName>Hemoglobin subunit alpha-D</fullName>
    </recommendedName>
    <alternativeName>
        <fullName>Alpha-D-globin</fullName>
    </alternativeName>
    <alternativeName>
        <fullName>Hemoglobin alpha-D chain</fullName>
    </alternativeName>
</protein>
<proteinExistence type="evidence at protein level"/>
<dbReference type="PIR" id="A02328">
    <property type="entry name" value="HAGSDC"/>
</dbReference>
<dbReference type="SMR" id="P04240"/>
<dbReference type="GO" id="GO:0072562">
    <property type="term" value="C:blood microparticle"/>
    <property type="evidence" value="ECO:0007669"/>
    <property type="project" value="TreeGrafter"/>
</dbReference>
<dbReference type="GO" id="GO:0031838">
    <property type="term" value="C:haptoglobin-hemoglobin complex"/>
    <property type="evidence" value="ECO:0007669"/>
    <property type="project" value="TreeGrafter"/>
</dbReference>
<dbReference type="GO" id="GO:0005833">
    <property type="term" value="C:hemoglobin complex"/>
    <property type="evidence" value="ECO:0007669"/>
    <property type="project" value="InterPro"/>
</dbReference>
<dbReference type="GO" id="GO:0031720">
    <property type="term" value="F:haptoglobin binding"/>
    <property type="evidence" value="ECO:0007669"/>
    <property type="project" value="TreeGrafter"/>
</dbReference>
<dbReference type="GO" id="GO:0020037">
    <property type="term" value="F:heme binding"/>
    <property type="evidence" value="ECO:0007669"/>
    <property type="project" value="InterPro"/>
</dbReference>
<dbReference type="GO" id="GO:0005506">
    <property type="term" value="F:iron ion binding"/>
    <property type="evidence" value="ECO:0007669"/>
    <property type="project" value="InterPro"/>
</dbReference>
<dbReference type="GO" id="GO:0043177">
    <property type="term" value="F:organic acid binding"/>
    <property type="evidence" value="ECO:0007669"/>
    <property type="project" value="TreeGrafter"/>
</dbReference>
<dbReference type="GO" id="GO:0019825">
    <property type="term" value="F:oxygen binding"/>
    <property type="evidence" value="ECO:0007669"/>
    <property type="project" value="InterPro"/>
</dbReference>
<dbReference type="GO" id="GO:0005344">
    <property type="term" value="F:oxygen carrier activity"/>
    <property type="evidence" value="ECO:0007669"/>
    <property type="project" value="UniProtKB-KW"/>
</dbReference>
<dbReference type="GO" id="GO:0004601">
    <property type="term" value="F:peroxidase activity"/>
    <property type="evidence" value="ECO:0007669"/>
    <property type="project" value="TreeGrafter"/>
</dbReference>
<dbReference type="GO" id="GO:0042744">
    <property type="term" value="P:hydrogen peroxide catabolic process"/>
    <property type="evidence" value="ECO:0007669"/>
    <property type="project" value="TreeGrafter"/>
</dbReference>
<dbReference type="CDD" id="cd08927">
    <property type="entry name" value="Hb-alpha-like"/>
    <property type="match status" value="1"/>
</dbReference>
<dbReference type="FunFam" id="1.10.490.10:FF:000002">
    <property type="entry name" value="Hemoglobin subunit alpha"/>
    <property type="match status" value="1"/>
</dbReference>
<dbReference type="Gene3D" id="1.10.490.10">
    <property type="entry name" value="Globins"/>
    <property type="match status" value="1"/>
</dbReference>
<dbReference type="InterPro" id="IPR000971">
    <property type="entry name" value="Globin"/>
</dbReference>
<dbReference type="InterPro" id="IPR009050">
    <property type="entry name" value="Globin-like_sf"/>
</dbReference>
<dbReference type="InterPro" id="IPR012292">
    <property type="entry name" value="Globin/Proto"/>
</dbReference>
<dbReference type="InterPro" id="IPR002338">
    <property type="entry name" value="Hemoglobin_a-typ"/>
</dbReference>
<dbReference type="InterPro" id="IPR050056">
    <property type="entry name" value="Hemoglobin_oxygen_transport"/>
</dbReference>
<dbReference type="InterPro" id="IPR002340">
    <property type="entry name" value="Hemoglobin_zeta"/>
</dbReference>
<dbReference type="PANTHER" id="PTHR11442">
    <property type="entry name" value="HEMOGLOBIN FAMILY MEMBER"/>
    <property type="match status" value="1"/>
</dbReference>
<dbReference type="PANTHER" id="PTHR11442:SF41">
    <property type="entry name" value="HEMOGLOBIN SUBUNIT ZETA"/>
    <property type="match status" value="1"/>
</dbReference>
<dbReference type="Pfam" id="PF00042">
    <property type="entry name" value="Globin"/>
    <property type="match status" value="1"/>
</dbReference>
<dbReference type="PRINTS" id="PR00612">
    <property type="entry name" value="ALPHAHAEM"/>
</dbReference>
<dbReference type="PRINTS" id="PR00816">
    <property type="entry name" value="ZETAHAEM"/>
</dbReference>
<dbReference type="SUPFAM" id="SSF46458">
    <property type="entry name" value="Globin-like"/>
    <property type="match status" value="1"/>
</dbReference>
<dbReference type="PROSITE" id="PS01033">
    <property type="entry name" value="GLOBIN"/>
    <property type="match status" value="1"/>
</dbReference>
<keyword id="KW-0903">Direct protein sequencing</keyword>
<keyword id="KW-0349">Heme</keyword>
<keyword id="KW-0408">Iron</keyword>
<keyword id="KW-0479">Metal-binding</keyword>
<keyword id="KW-0561">Oxygen transport</keyword>
<keyword id="KW-0813">Transport</keyword>
<sequence length="141" mass="15804">MLTADDKKILAQLWEKVAGHQDEFGNEALERMFVTYPQTKTYFPHFDLHPGSEQVRSHGKKVAAALSNAVKSIDNLSQALSELSNLHAYNLRVDPANFKLLSQCFQVVLAVHLGKDYTPEMHAAFDKFLSAVAAVLAEKYR</sequence>
<organism>
    <name type="scientific">Branta canadensis</name>
    <name type="common">Canada goose</name>
    <name type="synonym">Anas canadensis</name>
    <dbReference type="NCBI Taxonomy" id="8853"/>
    <lineage>
        <taxon>Eukaryota</taxon>
        <taxon>Metazoa</taxon>
        <taxon>Chordata</taxon>
        <taxon>Craniata</taxon>
        <taxon>Vertebrata</taxon>
        <taxon>Euteleostomi</taxon>
        <taxon>Archelosauria</taxon>
        <taxon>Archosauria</taxon>
        <taxon>Dinosauria</taxon>
        <taxon>Saurischia</taxon>
        <taxon>Theropoda</taxon>
        <taxon>Coelurosauria</taxon>
        <taxon>Aves</taxon>
        <taxon>Neognathae</taxon>
        <taxon>Galloanserae</taxon>
        <taxon>Anseriformes</taxon>
        <taxon>Anatidae</taxon>
        <taxon>Anserinae</taxon>
        <taxon>Branta</taxon>
    </lineage>
</organism>